<comment type="function">
    <text evidence="4">During the development in the mosquito vector, plays an essential role in sporozoite egress from the oocyst and sporozoite gliding motility, which is required for the invasion of salivary glands and subsequent transmission to the host.</text>
</comment>
<comment type="developmental stage">
    <text evidence="4">Highly expressed at day 4 post-infection of the mosquito midgut followed by a reduction at day 8 post-infection and in midgut sporozoites (PubMed:28192122). Expression is low in salivary gland sporozoites (PubMed:28192122). Not expressed during the host liver stage (PubMed:28192122).</text>
</comment>
<comment type="disruption phenotype">
    <text evidence="4">In the mosquito vector, midgut infection and oocyst development are normal; however, sporozoites fail to egress from oocysts and their gliding motility is impaired resulting in a failure to invade the salivary glands (PubMed:28192122). Processing of circumsporozoite protein CSP on the oocyst inner surface is normal (PubMed:28192122). In the mouse host, sporozoite invasion of the liver is impaired but the growth and development of asexual blood stages are normal (PubMed:28192122).</text>
</comment>
<comment type="similarity">
    <text evidence="3">Belongs to the peptidase A1 family.</text>
</comment>
<comment type="caution">
    <text evidence="6">It is unclear if PMVIII is glycosylated as other members of the same enzyme family, i.e. PMI and PMII, are not.</text>
</comment>
<sequence>MNKFFVFPLLLILNSIVLVKSLTENLRVSRYSKPGVSTIILKGGYINRQFIGEISIGNPPQSFKVLFDTGSTNLWIPSKNCYAKACYNKKKYDYNISKNYRISSSKNPVNIFFGTGKVQIAYATDDIHLGSIKVRNQEFGIANYMSDDPFSDMQFDGLFGLGISEDIKRKGLIYDNIPRNSSRKNVFSIYYPKSVDDNGAITFGGYDKKYIEPNSNIDWFVVSSRKYWTIKMTGIKINGLFLEVCSGNIEGYCDAVIDTGTSSIAGPQNDLILLTKLLNPVKSCQNKTLLKNFSFVFSDENGVEKEYELTSNDYIVNSFKVDPILKNPCNFAFMPINISSPNGYLYILGQVFLQKYYAIFEKDNMRIGLAKSI</sequence>
<organism evidence="8">
    <name type="scientific">Plasmodium berghei (strain Anka)</name>
    <dbReference type="NCBI Taxonomy" id="5823"/>
    <lineage>
        <taxon>Eukaryota</taxon>
        <taxon>Sar</taxon>
        <taxon>Alveolata</taxon>
        <taxon>Apicomplexa</taxon>
        <taxon>Aconoidasida</taxon>
        <taxon>Haemosporida</taxon>
        <taxon>Plasmodiidae</taxon>
        <taxon>Plasmodium</taxon>
        <taxon>Plasmodium (Vinckeia)</taxon>
    </lineage>
</organism>
<accession>A0A509AWX2</accession>
<name>PLM8_PLABA</name>
<gene>
    <name evidence="5" type="primary">PMVIII</name>
    <name evidence="6" type="synonym">PM8</name>
    <name evidence="7" type="ORF">PBANKA_1329100</name>
</gene>
<keyword id="KW-0064">Aspartyl protease</keyword>
<keyword id="KW-0378">Hydrolase</keyword>
<keyword id="KW-0645">Protease</keyword>
<keyword id="KW-1185">Reference proteome</keyword>
<keyword id="KW-0732">Signal</keyword>
<keyword id="KW-0865">Zymogen</keyword>
<feature type="signal peptide" evidence="1">
    <location>
        <begin position="1"/>
        <end position="21"/>
    </location>
</feature>
<feature type="propeptide" id="PRO_0000453698" evidence="6">
    <location>
        <begin position="22"/>
        <end status="unknown"/>
    </location>
</feature>
<feature type="chain" id="PRO_5021226517" description="Plasmepsin VIII" evidence="1">
    <location>
        <begin status="unknown"/>
        <end position="373"/>
    </location>
</feature>
<feature type="domain" description="Peptidase A1" evidence="2">
    <location>
        <begin position="50"/>
        <end position="370"/>
    </location>
</feature>
<feature type="active site" evidence="2">
    <location>
        <position position="68"/>
    </location>
</feature>
<feature type="active site" evidence="2">
    <location>
        <position position="258"/>
    </location>
</feature>
<reference evidence="8" key="1">
    <citation type="journal article" date="2014" name="BMC Biol.">
        <title>A comprehensive evaluation of rodent malaria parasite genomes and gene expression.</title>
        <authorList>
            <person name="Otto T.D."/>
            <person name="Bohme U."/>
            <person name="Jackson A.P."/>
            <person name="Hunt M."/>
            <person name="Franke-Fayard B."/>
            <person name="Hoeijmakers W.A."/>
            <person name="Religa A.A."/>
            <person name="Robertson L."/>
            <person name="Sanders M."/>
            <person name="Ogun S.A."/>
            <person name="Cunningham D."/>
            <person name="Erhart A."/>
            <person name="Billker O."/>
            <person name="Khan S.M."/>
            <person name="Stunnenberg H.G."/>
            <person name="Langhorne J."/>
            <person name="Holder A.A."/>
            <person name="Waters A.P."/>
            <person name="Newbold C.I."/>
            <person name="Pain A."/>
            <person name="Berriman M."/>
            <person name="Janse C.J."/>
        </authorList>
    </citation>
    <scope>NUCLEOTIDE SEQUENCE [LARGE SCALE GENOMIC DNA]</scope>
    <source>
        <strain evidence="8">ANKA</strain>
    </source>
</reference>
<reference evidence="6" key="2">
    <citation type="journal article" date="2017" name="Int. J. Parasitol.">
        <title>Plasmodium berghei plasmepsin VIII is essential for sporozoite gliding motility.</title>
        <authorList>
            <person name="Mastan B.S."/>
            <person name="Narwal S.K."/>
            <person name="Dey S."/>
            <person name="Kumar K.A."/>
            <person name="Mishra S."/>
        </authorList>
    </citation>
    <scope>FUNCTION</scope>
    <scope>DEVELOPMENTAL STAGE</scope>
    <scope>DISRUPTION PHENOTYPE</scope>
</reference>
<dbReference type="EC" id="3.4.23.-" evidence="6"/>
<dbReference type="EMBL" id="LK023128">
    <property type="protein sequence ID" value="VUC57677.1"/>
    <property type="molecule type" value="Genomic_DNA"/>
</dbReference>
<dbReference type="SMR" id="A0A509AWX2"/>
<dbReference type="STRING" id="5823.A0A509AWX2"/>
<dbReference type="VEuPathDB" id="PlasmoDB:PBANKA_1329100"/>
<dbReference type="InParanoid" id="A0A509AWX2"/>
<dbReference type="OMA" id="EFWRNHH"/>
<dbReference type="Proteomes" id="UP000074855">
    <property type="component" value="Chromosome 13"/>
</dbReference>
<dbReference type="GO" id="GO:0004190">
    <property type="term" value="F:aspartic-type endopeptidase activity"/>
    <property type="evidence" value="ECO:0007669"/>
    <property type="project" value="UniProtKB-KW"/>
</dbReference>
<dbReference type="GO" id="GO:0006508">
    <property type="term" value="P:proteolysis"/>
    <property type="evidence" value="ECO:0007669"/>
    <property type="project" value="UniProtKB-KW"/>
</dbReference>
<dbReference type="CDD" id="cd05471">
    <property type="entry name" value="pepsin_like"/>
    <property type="match status" value="1"/>
</dbReference>
<dbReference type="FunFam" id="2.40.70.10:FF:000115">
    <property type="entry name" value="Lysosomal aspartic protease"/>
    <property type="match status" value="1"/>
</dbReference>
<dbReference type="Gene3D" id="2.40.70.10">
    <property type="entry name" value="Acid Proteases"/>
    <property type="match status" value="2"/>
</dbReference>
<dbReference type="InterPro" id="IPR001461">
    <property type="entry name" value="Aspartic_peptidase_A1"/>
</dbReference>
<dbReference type="InterPro" id="IPR001969">
    <property type="entry name" value="Aspartic_peptidase_AS"/>
</dbReference>
<dbReference type="InterPro" id="IPR034164">
    <property type="entry name" value="Pepsin-like_dom"/>
</dbReference>
<dbReference type="InterPro" id="IPR033121">
    <property type="entry name" value="PEPTIDASE_A1"/>
</dbReference>
<dbReference type="InterPro" id="IPR021109">
    <property type="entry name" value="Peptidase_aspartic_dom_sf"/>
</dbReference>
<dbReference type="PANTHER" id="PTHR47966">
    <property type="entry name" value="BETA-SITE APP-CLEAVING ENZYME, ISOFORM A-RELATED"/>
    <property type="match status" value="1"/>
</dbReference>
<dbReference type="PANTHER" id="PTHR47966:SF51">
    <property type="entry name" value="BETA-SITE APP-CLEAVING ENZYME, ISOFORM A-RELATED"/>
    <property type="match status" value="1"/>
</dbReference>
<dbReference type="Pfam" id="PF00026">
    <property type="entry name" value="Asp"/>
    <property type="match status" value="1"/>
</dbReference>
<dbReference type="PRINTS" id="PR00792">
    <property type="entry name" value="PEPSIN"/>
</dbReference>
<dbReference type="SUPFAM" id="SSF50630">
    <property type="entry name" value="Acid proteases"/>
    <property type="match status" value="1"/>
</dbReference>
<dbReference type="PROSITE" id="PS00141">
    <property type="entry name" value="ASP_PROTEASE"/>
    <property type="match status" value="2"/>
</dbReference>
<dbReference type="PROSITE" id="PS51767">
    <property type="entry name" value="PEPTIDASE_A1"/>
    <property type="match status" value="1"/>
</dbReference>
<protein>
    <recommendedName>
        <fullName evidence="5">Plasmepsin VIII</fullName>
        <shortName evidence="5">PbPMVIII</shortName>
        <ecNumber evidence="6">3.4.23.-</ecNumber>
    </recommendedName>
    <alternativeName>
        <fullName evidence="6">Plasmepsin 8</fullName>
    </alternativeName>
</protein>
<evidence type="ECO:0000255" key="1"/>
<evidence type="ECO:0000255" key="2">
    <source>
        <dbReference type="PROSITE-ProRule" id="PRU01103"/>
    </source>
</evidence>
<evidence type="ECO:0000255" key="3">
    <source>
        <dbReference type="RuleBase" id="RU000454"/>
    </source>
</evidence>
<evidence type="ECO:0000269" key="4">
    <source>
    </source>
</evidence>
<evidence type="ECO:0000303" key="5">
    <source>
    </source>
</evidence>
<evidence type="ECO:0000305" key="6"/>
<evidence type="ECO:0000312" key="7">
    <source>
        <dbReference type="EMBL" id="VUC57677.1"/>
    </source>
</evidence>
<evidence type="ECO:0000312" key="8">
    <source>
        <dbReference type="Proteomes" id="UP000074855"/>
    </source>
</evidence>
<proteinExistence type="evidence at transcript level"/>